<feature type="chain" id="PRO_0000250482" description="Guanylate-binding protein 1">
    <location>
        <begin position="1"/>
        <end position="589"/>
    </location>
</feature>
<feature type="propeptide" id="PRO_0000396778" description="Removed in mature form" evidence="1">
    <location>
        <begin position="590"/>
        <end position="592"/>
    </location>
</feature>
<feature type="domain" description="GB1/RHD3-type G" evidence="3">
    <location>
        <begin position="35"/>
        <end position="278"/>
    </location>
</feature>
<feature type="region of interest" description="GTPase domain (Globular)" evidence="1">
    <location>
        <begin position="1"/>
        <end position="311"/>
    </location>
</feature>
<feature type="binding site" evidence="1">
    <location>
        <begin position="45"/>
        <end position="52"/>
    </location>
    <ligand>
        <name>GTP</name>
        <dbReference type="ChEBI" id="CHEBI:37565"/>
    </ligand>
</feature>
<feature type="binding site" evidence="1">
    <location>
        <begin position="67"/>
        <end position="69"/>
    </location>
    <ligand>
        <name>GTP</name>
        <dbReference type="ChEBI" id="CHEBI:37565"/>
    </ligand>
</feature>
<feature type="binding site" evidence="1">
    <location>
        <begin position="97"/>
        <end position="101"/>
    </location>
    <ligand>
        <name>GTP</name>
        <dbReference type="ChEBI" id="CHEBI:37565"/>
    </ligand>
</feature>
<feature type="modified residue" description="Phosphoserine" evidence="1">
    <location>
        <position position="156"/>
    </location>
</feature>
<feature type="modified residue" description="Cysteine methyl ester" evidence="1">
    <location>
        <position position="589"/>
    </location>
</feature>
<feature type="modified residue" description="Phosphothreonine" evidence="1">
    <location>
        <position position="590"/>
    </location>
</feature>
<feature type="lipid moiety-binding region" description="S-farnesyl cysteine" evidence="1">
    <location>
        <position position="589"/>
    </location>
</feature>
<keyword id="KW-0051">Antiviral defense</keyword>
<keyword id="KW-1003">Cell membrane</keyword>
<keyword id="KW-0963">Cytoplasm</keyword>
<keyword id="KW-0968">Cytoplasmic vesicle</keyword>
<keyword id="KW-0333">Golgi apparatus</keyword>
<keyword id="KW-0342">GTP-binding</keyword>
<keyword id="KW-0378">Hydrolase</keyword>
<keyword id="KW-0391">Immunity</keyword>
<keyword id="KW-0399">Innate immunity</keyword>
<keyword id="KW-0449">Lipoprotein</keyword>
<keyword id="KW-0472">Membrane</keyword>
<keyword id="KW-0488">Methylation</keyword>
<keyword id="KW-0547">Nucleotide-binding</keyword>
<keyword id="KW-0597">Phosphoprotein</keyword>
<keyword id="KW-0636">Prenylation</keyword>
<keyword id="KW-1185">Reference proteome</keyword>
<keyword id="KW-0964">Secreted</keyword>
<organism>
    <name type="scientific">Pongo abelii</name>
    <name type="common">Sumatran orangutan</name>
    <name type="synonym">Pongo pygmaeus abelii</name>
    <dbReference type="NCBI Taxonomy" id="9601"/>
    <lineage>
        <taxon>Eukaryota</taxon>
        <taxon>Metazoa</taxon>
        <taxon>Chordata</taxon>
        <taxon>Craniata</taxon>
        <taxon>Vertebrata</taxon>
        <taxon>Euteleostomi</taxon>
        <taxon>Mammalia</taxon>
        <taxon>Eutheria</taxon>
        <taxon>Euarchontoglires</taxon>
        <taxon>Primates</taxon>
        <taxon>Haplorrhini</taxon>
        <taxon>Catarrhini</taxon>
        <taxon>Hominidae</taxon>
        <taxon>Pongo</taxon>
    </lineage>
</organism>
<name>GBP1_PONAB</name>
<reference key="1">
    <citation type="submission" date="2004-11" db="EMBL/GenBank/DDBJ databases">
        <authorList>
            <consortium name="The German cDNA consortium"/>
        </authorList>
    </citation>
    <scope>NUCLEOTIDE SEQUENCE [LARGE SCALE MRNA]</scope>
    <source>
        <tissue>Heart</tissue>
    </source>
</reference>
<comment type="function">
    <text evidence="1 2">Interferon (IFN)-inducible GTPase that plays important roles in innate immunity against a diverse range of bacterial, viral and protozoan pathogens. Hydrolyzes GTP to GMP in two consecutive cleavage reactions: GTP is first hydrolyzed to GDP and then to GMP in a processive manner. Following infection, recruited to the pathogen-containing vacuoles or vacuole-escaped bacteria and promotes both inflammasome assembly and autophagy. Acts as a positive regulator of inflammasome assembly by facilitating the detection of inflammasome ligands from pathogens (By similarity). Involved in the lysis of pathogen-containing vacuoles, releasing pathogens into the cytosol (By similarity). Following pathogen release in the cytosol, forms a protein coat in a GTPase-dependent manner that encapsulates pathogens and promotes the detection of ligands by pattern recognition receptors. Plays a key role in inflammasome assembly in response to infection by Gram-negative bacteria: following pathogen release in the cytosol, forms a protein coat that encapsulates Gram-negative bacteria and directly binds to lipopolysaccharide (LPS), disrupting the O-antigen barrier and unmasking lipid A that is that detected by the non-canonical inflammasome effector CASP4/CASP11. Also promotes recruitment of proteins that mediate bacterial cytolysis, leading to release double-stranded DNA (dsDNA) that activates the AIM2 inflammasome (By similarity). Involved in autophagy by regulating bacteriolytic peptide generation via its interaction with ubiquitin-binding protein SQSTM1, which delivers monoubiquitinated proteins to autolysosomes for the generation of bacteriolytic peptides (By similarity). Confers protection to several pathogens, including the bacterial pathogens L.monocytogenes and M.bovis BCG as well as the protozoan pathogen T.gondii. Exhibits antiviral activity against influenza virus (By similarity).</text>
</comment>
<comment type="catalytic activity">
    <reaction evidence="1">
        <text>GTP + H2O = GDP + phosphate + H(+)</text>
        <dbReference type="Rhea" id="RHEA:19669"/>
        <dbReference type="ChEBI" id="CHEBI:15377"/>
        <dbReference type="ChEBI" id="CHEBI:15378"/>
        <dbReference type="ChEBI" id="CHEBI:37565"/>
        <dbReference type="ChEBI" id="CHEBI:43474"/>
        <dbReference type="ChEBI" id="CHEBI:58189"/>
    </reaction>
    <physiologicalReaction direction="left-to-right" evidence="1">
        <dbReference type="Rhea" id="RHEA:19670"/>
    </physiologicalReaction>
</comment>
<comment type="catalytic activity">
    <reaction evidence="1">
        <text>GDP + H2O = GMP + phosphate + H(+)</text>
        <dbReference type="Rhea" id="RHEA:22156"/>
        <dbReference type="ChEBI" id="CHEBI:15377"/>
        <dbReference type="ChEBI" id="CHEBI:15378"/>
        <dbReference type="ChEBI" id="CHEBI:43474"/>
        <dbReference type="ChEBI" id="CHEBI:58115"/>
        <dbReference type="ChEBI" id="CHEBI:58189"/>
    </reaction>
    <physiologicalReaction direction="left-to-right" evidence="1">
        <dbReference type="Rhea" id="RHEA:22157"/>
    </physiologicalReaction>
</comment>
<comment type="subunit">
    <text evidence="1 2">Homodimer; homodimerization occurs upon GTP-binding and is required for the second hydrolysis step from GDP to GMP. Undergoes conformational changes and oligomerization upon GTP-binding and hydrolysis. Heterodimer with other family members, including GBP2, GBP3, GBP4 and GBP5. Dimerization regulates subcellular location to membranous structures (By similarity). Interacts with SQSTM1 (By similarity). Interacts (when phosphorylated) with 14-3-3 protein sigma (SFN); leading to GBP1 retention in the cytosol and inactivation (By similarity).</text>
</comment>
<comment type="subcellular location">
    <subcellularLocation>
        <location evidence="1">Cytoplasmic vesicle membrane</location>
        <topology evidence="1">Lipid-anchor</topology>
        <orientation evidence="1">Cytoplasmic side</orientation>
    </subcellularLocation>
    <subcellularLocation>
        <location evidence="1">Golgi apparatus membrane</location>
        <topology evidence="1">Lipid-anchor</topology>
        <orientation evidence="1">Cytoplasmic side</orientation>
    </subcellularLocation>
    <subcellularLocation>
        <location evidence="1">Cell membrane</location>
        <topology evidence="1">Lipid-anchor</topology>
        <orientation evidence="1">Cytoplasmic side</orientation>
    </subcellularLocation>
    <subcellularLocation>
        <location evidence="1">Cytoplasm</location>
        <location evidence="1">Cytosol</location>
    </subcellularLocation>
    <subcellularLocation>
        <location evidence="1">Secreted</location>
    </subcellularLocation>
    <text evidence="1">Localizes to pathogen-containing vacuoles or to the cell surface of bacteria that escaped vacuoles. Secreted from endothelial cells in the cerebrospinal fluid, upon bacterial challenge and independently of IFNG induction. Golgi membrane localization requires isoprenylation and the presence of another IFNG-induced factor. Sequestered in the cytosol following phosphorylation by PIM1 and subsequent interaction with 14-3-3 protein sigma (SFN).</text>
</comment>
<comment type="PTM">
    <text evidence="1">Isoprenylation is required for proper subcellular location.</text>
</comment>
<comment type="PTM">
    <text evidence="1">Phosphorylated at Ser-156 by PIM1 in absence of infection, inhibits GBP1: phosphorylation promotes interaction with 14-3-3 protein sigma (SFN), leading to GBP1 retention in the cytosol. Dephosphorylated in response to infection, liberating GBP1.</text>
</comment>
<comment type="similarity">
    <text evidence="3">Belongs to the TRAFAC class dynamin-like GTPase superfamily. GB1/RHD3 GTPase family. GB1 subfamily.</text>
</comment>
<accession>Q5RBE1</accession>
<proteinExistence type="evidence at transcript level"/>
<evidence type="ECO:0000250" key="1">
    <source>
        <dbReference type="UniProtKB" id="P32455"/>
    </source>
</evidence>
<evidence type="ECO:0000250" key="2">
    <source>
        <dbReference type="UniProtKB" id="Q01514"/>
    </source>
</evidence>
<evidence type="ECO:0000255" key="3">
    <source>
        <dbReference type="PROSITE-ProRule" id="PRU01052"/>
    </source>
</evidence>
<dbReference type="EC" id="3.6.1.-" evidence="1"/>
<dbReference type="EC" id="3.6.5.-" evidence="1"/>
<dbReference type="EMBL" id="CR858710">
    <property type="protein sequence ID" value="CAH90919.1"/>
    <property type="molecule type" value="mRNA"/>
</dbReference>
<dbReference type="RefSeq" id="NP_001125525.1">
    <property type="nucleotide sequence ID" value="NM_001132053.1"/>
</dbReference>
<dbReference type="SMR" id="Q5RBE1"/>
<dbReference type="FunCoup" id="Q5RBE1">
    <property type="interactions" value="236"/>
</dbReference>
<dbReference type="STRING" id="9601.ENSPPYP00000001360"/>
<dbReference type="GeneID" id="100172437"/>
<dbReference type="CTD" id="2633"/>
<dbReference type="eggNOG" id="KOG2037">
    <property type="taxonomic scope" value="Eukaryota"/>
</dbReference>
<dbReference type="InParanoid" id="Q5RBE1"/>
<dbReference type="OrthoDB" id="2135133at2759"/>
<dbReference type="Proteomes" id="UP000001595">
    <property type="component" value="Unplaced"/>
</dbReference>
<dbReference type="GO" id="GO:0030659">
    <property type="term" value="C:cytoplasmic vesicle membrane"/>
    <property type="evidence" value="ECO:0007669"/>
    <property type="project" value="UniProtKB-SubCell"/>
</dbReference>
<dbReference type="GO" id="GO:0005829">
    <property type="term" value="C:cytosol"/>
    <property type="evidence" value="ECO:0007669"/>
    <property type="project" value="UniProtKB-SubCell"/>
</dbReference>
<dbReference type="GO" id="GO:0005576">
    <property type="term" value="C:extracellular region"/>
    <property type="evidence" value="ECO:0007669"/>
    <property type="project" value="UniProtKB-SubCell"/>
</dbReference>
<dbReference type="GO" id="GO:0000139">
    <property type="term" value="C:Golgi membrane"/>
    <property type="evidence" value="ECO:0007669"/>
    <property type="project" value="UniProtKB-SubCell"/>
</dbReference>
<dbReference type="GO" id="GO:0005886">
    <property type="term" value="C:plasma membrane"/>
    <property type="evidence" value="ECO:0007669"/>
    <property type="project" value="UniProtKB-SubCell"/>
</dbReference>
<dbReference type="GO" id="GO:0106139">
    <property type="term" value="C:symbiont cell surface"/>
    <property type="evidence" value="ECO:0000250"/>
    <property type="project" value="UniProtKB"/>
</dbReference>
<dbReference type="GO" id="GO:0004382">
    <property type="term" value="F:GDP phosphatase activity"/>
    <property type="evidence" value="ECO:0007669"/>
    <property type="project" value="RHEA"/>
</dbReference>
<dbReference type="GO" id="GO:0005525">
    <property type="term" value="F:GTP binding"/>
    <property type="evidence" value="ECO:0000250"/>
    <property type="project" value="UniProtKB"/>
</dbReference>
<dbReference type="GO" id="GO:0003924">
    <property type="term" value="F:GTPase activity"/>
    <property type="evidence" value="ECO:0000250"/>
    <property type="project" value="UniProtKB"/>
</dbReference>
<dbReference type="GO" id="GO:0001530">
    <property type="term" value="F:lipopolysaccharide binding"/>
    <property type="evidence" value="ECO:0000250"/>
    <property type="project" value="UniProtKB"/>
</dbReference>
<dbReference type="GO" id="GO:0051715">
    <property type="term" value="P:cytolysis in another organism"/>
    <property type="evidence" value="ECO:0000250"/>
    <property type="project" value="UniProtKB"/>
</dbReference>
<dbReference type="GO" id="GO:0042742">
    <property type="term" value="P:defense response to bacterium"/>
    <property type="evidence" value="ECO:0000250"/>
    <property type="project" value="UniProtKB"/>
</dbReference>
<dbReference type="GO" id="GO:0042832">
    <property type="term" value="P:defense response to protozoan"/>
    <property type="evidence" value="ECO:0000250"/>
    <property type="project" value="UniProtKB"/>
</dbReference>
<dbReference type="GO" id="GO:0051607">
    <property type="term" value="P:defense response to virus"/>
    <property type="evidence" value="ECO:0007669"/>
    <property type="project" value="UniProtKB-KW"/>
</dbReference>
<dbReference type="GO" id="GO:0045087">
    <property type="term" value="P:innate immune response"/>
    <property type="evidence" value="ECO:0007669"/>
    <property type="project" value="UniProtKB-KW"/>
</dbReference>
<dbReference type="GO" id="GO:0160075">
    <property type="term" value="P:non-canonical inflammasome complex assembly"/>
    <property type="evidence" value="ECO:0000250"/>
    <property type="project" value="UniProtKB"/>
</dbReference>
<dbReference type="GO" id="GO:0140639">
    <property type="term" value="P:positive regulation of pyroptotic inflammatory response"/>
    <property type="evidence" value="ECO:0000250"/>
    <property type="project" value="UniProtKB"/>
</dbReference>
<dbReference type="CDD" id="cd01851">
    <property type="entry name" value="GBP"/>
    <property type="match status" value="1"/>
</dbReference>
<dbReference type="CDD" id="cd16269">
    <property type="entry name" value="GBP_C"/>
    <property type="match status" value="1"/>
</dbReference>
<dbReference type="FunFam" id="1.20.1000.10:FF:000001">
    <property type="entry name" value="Guanylate binding protein 1"/>
    <property type="match status" value="1"/>
</dbReference>
<dbReference type="FunFam" id="3.40.50.300:FF:000422">
    <property type="entry name" value="Guanylate-binding protein 1"/>
    <property type="match status" value="1"/>
</dbReference>
<dbReference type="Gene3D" id="1.20.1000.10">
    <property type="entry name" value="Guanylate-binding protein, C-terminal domain"/>
    <property type="match status" value="1"/>
</dbReference>
<dbReference type="Gene3D" id="3.40.50.300">
    <property type="entry name" value="P-loop containing nucleotide triphosphate hydrolases"/>
    <property type="match status" value="1"/>
</dbReference>
<dbReference type="InterPro" id="IPR030386">
    <property type="entry name" value="G_GB1_RHD3_dom"/>
</dbReference>
<dbReference type="InterPro" id="IPR037684">
    <property type="entry name" value="GBP_C"/>
</dbReference>
<dbReference type="InterPro" id="IPR003191">
    <property type="entry name" value="Guanylate-bd/ATL_C"/>
</dbReference>
<dbReference type="InterPro" id="IPR036543">
    <property type="entry name" value="Guanylate-bd_C_sf"/>
</dbReference>
<dbReference type="InterPro" id="IPR015894">
    <property type="entry name" value="Guanylate-bd_N"/>
</dbReference>
<dbReference type="InterPro" id="IPR027417">
    <property type="entry name" value="P-loop_NTPase"/>
</dbReference>
<dbReference type="PANTHER" id="PTHR10751">
    <property type="entry name" value="GUANYLATE BINDING PROTEIN"/>
    <property type="match status" value="1"/>
</dbReference>
<dbReference type="Pfam" id="PF02263">
    <property type="entry name" value="GBP"/>
    <property type="match status" value="1"/>
</dbReference>
<dbReference type="Pfam" id="PF02841">
    <property type="entry name" value="GBP_C"/>
    <property type="match status" value="1"/>
</dbReference>
<dbReference type="SUPFAM" id="SSF48340">
    <property type="entry name" value="Interferon-induced guanylate-binding protein 1 (GBP1), C-terminal domain"/>
    <property type="match status" value="1"/>
</dbReference>
<dbReference type="SUPFAM" id="SSF52540">
    <property type="entry name" value="P-loop containing nucleoside triphosphate hydrolases"/>
    <property type="match status" value="1"/>
</dbReference>
<dbReference type="PROSITE" id="PS51715">
    <property type="entry name" value="G_GB1_RHD3"/>
    <property type="match status" value="1"/>
</dbReference>
<sequence>MASEIHMTGPMCLIESTNGRLMANPEALKILSAITQPMVVVAIVGLYRTGKSYLMNKLAGKKKGFSLGSTVQSHTKGIWMWCVPHPKKPGHILVLLDTEGLGDVEKGDNQNDSWIFALAVLLSSTFVYNSIGTINQQAMDQLYYVTELTHRIRSKSSPDENENEVEDSADFVSFFPDFVWTLRDFSLDLEADGQPLTPDEYLTYSLKLKKGTSQKDETFNLPRLCIRKFFPKKKCFVFDRPVHRRKLAQLEKLQDEELDPEFVQQVADFCSYIFSNSKTKTLSGGIQVNGPRLESLVLTYVNAISSGDLPCMENAVLALAQIENSAAVQKAIAHYEQQMGQKVQLPTESLQELLDLHRDSEREAIEVFIRSSFKDVDHLFQKELAAQLEKKRDDFCKQNQEASSDRCSGLLQVIFSPLEEEVKAGIYSKPGGYRLFVQKLQDLKKKYYEEPRKGIQAEEILQTYLKSKESMTDAILQTDQTLTEKEKEIEVERVKAESAQASAKMLQEMQRKNEQMMEQKERSYQEHLKQLTEKMENDRVQLLKEQERTLALKLQEQEQLLKEGFQKESRIMKNEIQDLQTKMRRRKACTIS</sequence>
<protein>
    <recommendedName>
        <fullName>Guanylate-binding protein 1</fullName>
        <ecNumber evidence="1">3.6.1.-</ecNumber>
        <ecNumber evidence="1">3.6.5.-</ecNumber>
    </recommendedName>
    <alternativeName>
        <fullName>GTP-binding protein 1</fullName>
        <shortName>GBP-1</shortName>
    </alternativeName>
    <alternativeName>
        <fullName>Guanine nucleotide-binding protein 1</fullName>
    </alternativeName>
    <alternativeName>
        <fullName>Interferon-induced guanylate-binding protein 1</fullName>
    </alternativeName>
</protein>
<gene>
    <name type="primary">GBP1</name>
</gene>